<keyword id="KW-0963">Cytoplasm</keyword>
<keyword id="KW-0255">Endonuclease</keyword>
<keyword id="KW-0378">Hydrolase</keyword>
<keyword id="KW-0460">Magnesium</keyword>
<keyword id="KW-0479">Metal-binding</keyword>
<keyword id="KW-0540">Nuclease</keyword>
<proteinExistence type="inferred from homology"/>
<organism>
    <name type="scientific">Bacillus cereus (strain ATCC 10987 / NRS 248)</name>
    <dbReference type="NCBI Taxonomy" id="222523"/>
    <lineage>
        <taxon>Bacteria</taxon>
        <taxon>Bacillati</taxon>
        <taxon>Bacillota</taxon>
        <taxon>Bacilli</taxon>
        <taxon>Bacillales</taxon>
        <taxon>Bacillaceae</taxon>
        <taxon>Bacillus</taxon>
        <taxon>Bacillus cereus group</taxon>
    </lineage>
</organism>
<accession>Q72ZI6</accession>
<protein>
    <recommendedName>
        <fullName evidence="1">Ribonuclease HIII</fullName>
        <shortName evidence="1">RNase HIII</shortName>
        <ecNumber evidence="1">3.1.26.4</ecNumber>
    </recommendedName>
</protein>
<reference key="1">
    <citation type="journal article" date="2004" name="Nucleic Acids Res.">
        <title>The genome sequence of Bacillus cereus ATCC 10987 reveals metabolic adaptations and a large plasmid related to Bacillus anthracis pXO1.</title>
        <authorList>
            <person name="Rasko D.A."/>
            <person name="Ravel J."/>
            <person name="Oekstad O.A."/>
            <person name="Helgason E."/>
            <person name="Cer R.Z."/>
            <person name="Jiang L."/>
            <person name="Shores K.A."/>
            <person name="Fouts D.E."/>
            <person name="Tourasse N.J."/>
            <person name="Angiuoli S.V."/>
            <person name="Kolonay J.F."/>
            <person name="Nelson W.C."/>
            <person name="Kolstoe A.-B."/>
            <person name="Fraser C.M."/>
            <person name="Read T.D."/>
        </authorList>
    </citation>
    <scope>NUCLEOTIDE SEQUENCE [LARGE SCALE GENOMIC DNA]</scope>
    <source>
        <strain>ATCC 10987 / NRS 248</strain>
    </source>
</reference>
<name>RNH3_BACC1</name>
<dbReference type="EC" id="3.1.26.4" evidence="1"/>
<dbReference type="EMBL" id="AE017194">
    <property type="protein sequence ID" value="AAS43583.1"/>
    <property type="molecule type" value="Genomic_DNA"/>
</dbReference>
<dbReference type="SMR" id="Q72ZI6"/>
<dbReference type="KEGG" id="bca:BCE_4682"/>
<dbReference type="HOGENOM" id="CLU_059546_1_0_9"/>
<dbReference type="Proteomes" id="UP000002527">
    <property type="component" value="Chromosome"/>
</dbReference>
<dbReference type="GO" id="GO:0005737">
    <property type="term" value="C:cytoplasm"/>
    <property type="evidence" value="ECO:0007669"/>
    <property type="project" value="UniProtKB-SubCell"/>
</dbReference>
<dbReference type="GO" id="GO:0032299">
    <property type="term" value="C:ribonuclease H2 complex"/>
    <property type="evidence" value="ECO:0007669"/>
    <property type="project" value="TreeGrafter"/>
</dbReference>
<dbReference type="GO" id="GO:0000287">
    <property type="term" value="F:magnesium ion binding"/>
    <property type="evidence" value="ECO:0007669"/>
    <property type="project" value="UniProtKB-UniRule"/>
</dbReference>
<dbReference type="GO" id="GO:0003723">
    <property type="term" value="F:RNA binding"/>
    <property type="evidence" value="ECO:0007669"/>
    <property type="project" value="InterPro"/>
</dbReference>
<dbReference type="GO" id="GO:0004523">
    <property type="term" value="F:RNA-DNA hybrid ribonuclease activity"/>
    <property type="evidence" value="ECO:0007669"/>
    <property type="project" value="UniProtKB-UniRule"/>
</dbReference>
<dbReference type="GO" id="GO:0043137">
    <property type="term" value="P:DNA replication, removal of RNA primer"/>
    <property type="evidence" value="ECO:0007669"/>
    <property type="project" value="TreeGrafter"/>
</dbReference>
<dbReference type="GO" id="GO:0006298">
    <property type="term" value="P:mismatch repair"/>
    <property type="evidence" value="ECO:0007669"/>
    <property type="project" value="TreeGrafter"/>
</dbReference>
<dbReference type="CDD" id="cd06590">
    <property type="entry name" value="RNase_HII_bacteria_HIII_like"/>
    <property type="match status" value="1"/>
</dbReference>
<dbReference type="CDD" id="cd14796">
    <property type="entry name" value="RNAse_HIII_N"/>
    <property type="match status" value="1"/>
</dbReference>
<dbReference type="FunFam" id="3.30.310.10:FF:000016">
    <property type="entry name" value="Ribonuclease HIII"/>
    <property type="match status" value="1"/>
</dbReference>
<dbReference type="FunFam" id="3.30.420.10:FF:000047">
    <property type="entry name" value="Ribonuclease HIII"/>
    <property type="match status" value="1"/>
</dbReference>
<dbReference type="Gene3D" id="3.30.420.10">
    <property type="entry name" value="Ribonuclease H-like superfamily/Ribonuclease H"/>
    <property type="match status" value="1"/>
</dbReference>
<dbReference type="Gene3D" id="3.30.310.10">
    <property type="entry name" value="TATA-Binding Protein"/>
    <property type="match status" value="1"/>
</dbReference>
<dbReference type="HAMAP" id="MF_00053">
    <property type="entry name" value="RNase_HIII"/>
    <property type="match status" value="1"/>
</dbReference>
<dbReference type="InterPro" id="IPR001352">
    <property type="entry name" value="RNase_HII/HIII"/>
</dbReference>
<dbReference type="InterPro" id="IPR024567">
    <property type="entry name" value="RNase_HII/HIII_dom"/>
</dbReference>
<dbReference type="InterPro" id="IPR004641">
    <property type="entry name" value="RNase_HIII"/>
</dbReference>
<dbReference type="InterPro" id="IPR024568">
    <property type="entry name" value="RNase_HIII_N"/>
</dbReference>
<dbReference type="InterPro" id="IPR012337">
    <property type="entry name" value="RNaseH-like_sf"/>
</dbReference>
<dbReference type="InterPro" id="IPR036397">
    <property type="entry name" value="RNaseH_sf"/>
</dbReference>
<dbReference type="InterPro" id="IPR012295">
    <property type="entry name" value="TBP_dom_sf"/>
</dbReference>
<dbReference type="NCBIfam" id="TIGR00716">
    <property type="entry name" value="rnhC"/>
    <property type="match status" value="1"/>
</dbReference>
<dbReference type="PANTHER" id="PTHR10954:SF23">
    <property type="entry name" value="RIBONUCLEASE"/>
    <property type="match status" value="1"/>
</dbReference>
<dbReference type="PANTHER" id="PTHR10954">
    <property type="entry name" value="RIBONUCLEASE H2 SUBUNIT A"/>
    <property type="match status" value="1"/>
</dbReference>
<dbReference type="Pfam" id="PF11858">
    <property type="entry name" value="DUF3378"/>
    <property type="match status" value="1"/>
</dbReference>
<dbReference type="Pfam" id="PF01351">
    <property type="entry name" value="RNase_HII"/>
    <property type="match status" value="1"/>
</dbReference>
<dbReference type="PIRSF" id="PIRSF037748">
    <property type="entry name" value="RnhC"/>
    <property type="match status" value="1"/>
</dbReference>
<dbReference type="SUPFAM" id="SSF53098">
    <property type="entry name" value="Ribonuclease H-like"/>
    <property type="match status" value="1"/>
</dbReference>
<dbReference type="PROSITE" id="PS51975">
    <property type="entry name" value="RNASE_H_2"/>
    <property type="match status" value="1"/>
</dbReference>
<comment type="function">
    <text evidence="1">Endonuclease that specifically degrades the RNA of RNA-DNA hybrids.</text>
</comment>
<comment type="catalytic activity">
    <reaction evidence="1">
        <text>Endonucleolytic cleavage to 5'-phosphomonoester.</text>
        <dbReference type="EC" id="3.1.26.4"/>
    </reaction>
</comment>
<comment type="cofactor">
    <cofactor evidence="1">
        <name>Mn(2+)</name>
        <dbReference type="ChEBI" id="CHEBI:29035"/>
    </cofactor>
    <cofactor evidence="1">
        <name>Mg(2+)</name>
        <dbReference type="ChEBI" id="CHEBI:18420"/>
    </cofactor>
    <text evidence="1">Manganese or magnesium. Binds 1 divalent metal ion per monomer in the absence of substrate. May bind a second metal ion after substrate binding.</text>
</comment>
<comment type="subcellular location">
    <subcellularLocation>
        <location evidence="1">Cytoplasm</location>
    </subcellularLocation>
</comment>
<comment type="similarity">
    <text evidence="1">Belongs to the RNase HII family. RnhC subfamily.</text>
</comment>
<gene>
    <name evidence="1" type="primary">rnhC</name>
    <name type="ordered locus">BCE_4682</name>
</gene>
<sequence>MSNSIVIQTSSTVIEDMKQQYKHSLSPKTPQGGIFMAKVPSCTITAYKSGKVMFQGGRAEAEAARWQTVSQTPKTAVKKSVDSHRYAPPASIGTMSIVGSDEVGTGDFFGPMTVVAVYVDAKQIPLLKELGVKDSKNLNDEQITAIAKQLLHVVPYSSLVLHNEKYNELFDKGNNQGKLKALLHNKAITNLLAKIAPTKPEGVLIDQFTQPDTYYKYLAKQKQVQRENVYFATKGESVHLAVAAASILARYSFVKQFDELSKKAGMPLPKGAGKQVDIAAAKLIQKLGKERLPEFVKLHFANTEKAFRLLK</sequence>
<feature type="chain" id="PRO_0000111676" description="Ribonuclease HIII">
    <location>
        <begin position="1"/>
        <end position="311"/>
    </location>
</feature>
<feature type="domain" description="RNase H type-2" evidence="2">
    <location>
        <begin position="95"/>
        <end position="311"/>
    </location>
</feature>
<feature type="binding site" evidence="1">
    <location>
        <position position="101"/>
    </location>
    <ligand>
        <name>a divalent metal cation</name>
        <dbReference type="ChEBI" id="CHEBI:60240"/>
    </ligand>
</feature>
<feature type="binding site" evidence="1">
    <location>
        <position position="102"/>
    </location>
    <ligand>
        <name>a divalent metal cation</name>
        <dbReference type="ChEBI" id="CHEBI:60240"/>
    </ligand>
</feature>
<feature type="binding site" evidence="1">
    <location>
        <position position="206"/>
    </location>
    <ligand>
        <name>a divalent metal cation</name>
        <dbReference type="ChEBI" id="CHEBI:60240"/>
    </ligand>
</feature>
<evidence type="ECO:0000255" key="1">
    <source>
        <dbReference type="HAMAP-Rule" id="MF_00053"/>
    </source>
</evidence>
<evidence type="ECO:0000255" key="2">
    <source>
        <dbReference type="PROSITE-ProRule" id="PRU01319"/>
    </source>
</evidence>